<feature type="chain" id="PRO_0000058490" description="Nicotinamide riboside transporter PnuC">
    <location>
        <begin position="1"/>
        <end position="239"/>
    </location>
</feature>
<feature type="topological domain" description="Cytoplasmic" evidence="3">
    <location>
        <begin position="1"/>
        <end position="21"/>
    </location>
</feature>
<feature type="transmembrane region" description="Helical" evidence="3">
    <location>
        <begin position="22"/>
        <end position="42"/>
    </location>
</feature>
<feature type="topological domain" description="Periplasmic" evidence="3">
    <location>
        <begin position="43"/>
        <end position="48"/>
    </location>
</feature>
<feature type="transmembrane region" description="Helical" evidence="3">
    <location>
        <begin position="49"/>
        <end position="68"/>
    </location>
</feature>
<feature type="topological domain" description="Cytoplasmic" evidence="3">
    <location>
        <begin position="69"/>
        <end position="71"/>
    </location>
</feature>
<feature type="transmembrane region" description="Helical" evidence="3">
    <location>
        <begin position="72"/>
        <end position="89"/>
    </location>
</feature>
<feature type="topological domain" description="Periplasmic" evidence="3">
    <location>
        <begin position="90"/>
        <end position="109"/>
    </location>
</feature>
<feature type="transmembrane region" description="Helical" evidence="3">
    <location>
        <begin position="110"/>
        <end position="127"/>
    </location>
</feature>
<feature type="topological domain" description="Cytoplasmic" evidence="3">
    <location>
        <begin position="128"/>
        <end position="157"/>
    </location>
</feature>
<feature type="transmembrane region" description="Helical" evidence="3">
    <location>
        <begin position="158"/>
        <end position="177"/>
    </location>
</feature>
<feature type="topological domain" description="Periplasmic" evidence="3">
    <location>
        <begin position="178"/>
        <end position="183"/>
    </location>
</feature>
<feature type="transmembrane region" description="Helical" evidence="3">
    <location>
        <begin position="184"/>
        <end position="206"/>
    </location>
</feature>
<feature type="topological domain" description="Cytoplasmic" evidence="3">
    <location>
        <begin position="207"/>
        <end position="239"/>
    </location>
</feature>
<feature type="binding site" evidence="1">
    <location>
        <position position="188"/>
    </location>
    <ligand>
        <name>beta-nicotinamide D-riboside</name>
        <dbReference type="ChEBI" id="CHEBI:15927"/>
    </ligand>
</feature>
<feature type="binding site" evidence="1">
    <location>
        <position position="192"/>
    </location>
    <ligand>
        <name>beta-nicotinamide D-riboside</name>
        <dbReference type="ChEBI" id="CHEBI:15927"/>
    </ligand>
</feature>
<feature type="sequence conflict" description="In Ref. 1." evidence="4" ref="1">
    <original>L</original>
    <variation>R</variation>
    <location>
        <position position="71"/>
    </location>
</feature>
<sequence length="239" mass="27191">MDFFSTHNILIHIPIGAGGYDLSWIEAVGTIAGLLCIWLASLEKISNYFFGLVNVTLFAIIFFQIQLYASLLLQLFFFAANIYGWYAWSRQTKDNQAELKIRWLPLPKAMAWLAICVIAIGLMTRYIDPVFAVLTRVAVAIMQMLGLQVTMPVLQPDAFPFWDSCMMVLSIVAMILMTRKYVENWLLWVIINVISVVIFALQGVYAMSLEYLILTFIAVNGSRLWINSARERGSRALSR</sequence>
<gene>
    <name type="primary">pnuC</name>
    <name type="ordered locus">STM0757</name>
</gene>
<organism>
    <name type="scientific">Salmonella typhimurium (strain LT2 / SGSC1412 / ATCC 700720)</name>
    <dbReference type="NCBI Taxonomy" id="99287"/>
    <lineage>
        <taxon>Bacteria</taxon>
        <taxon>Pseudomonadati</taxon>
        <taxon>Pseudomonadota</taxon>
        <taxon>Gammaproteobacteria</taxon>
        <taxon>Enterobacterales</taxon>
        <taxon>Enterobacteriaceae</taxon>
        <taxon>Salmonella</taxon>
    </lineage>
</organism>
<accession>P24520</accession>
<evidence type="ECO:0000250" key="1">
    <source>
        <dbReference type="UniProtKB" id="D2ZZC1"/>
    </source>
</evidence>
<evidence type="ECO:0000250" key="2">
    <source>
        <dbReference type="UniProtKB" id="Q57425"/>
    </source>
</evidence>
<evidence type="ECO:0000255" key="3"/>
<evidence type="ECO:0000305" key="4"/>
<reference key="1">
    <citation type="journal article" date="1990" name="J. Bacteriol.">
        <title>Regulation of NAD metabolism in Salmonella typhimurium: molecular sequence analysis of the bifunctional nadR regulator and the nadA-pnuC operon.</title>
        <authorList>
            <person name="Foster J.W."/>
            <person name="Park Y.K."/>
            <person name="Penfound T."/>
            <person name="Fenger T."/>
            <person name="Spector M.P."/>
        </authorList>
    </citation>
    <scope>NUCLEOTIDE SEQUENCE [GENOMIC DNA]</scope>
</reference>
<reference key="2">
    <citation type="journal article" date="2001" name="Nature">
        <title>Complete genome sequence of Salmonella enterica serovar Typhimurium LT2.</title>
        <authorList>
            <person name="McClelland M."/>
            <person name="Sanderson K.E."/>
            <person name="Spieth J."/>
            <person name="Clifton S.W."/>
            <person name="Latreille P."/>
            <person name="Courtney L."/>
            <person name="Porwollik S."/>
            <person name="Ali J."/>
            <person name="Dante M."/>
            <person name="Du F."/>
            <person name="Hou S."/>
            <person name="Layman D."/>
            <person name="Leonard S."/>
            <person name="Nguyen C."/>
            <person name="Scott K."/>
            <person name="Holmes A."/>
            <person name="Grewal N."/>
            <person name="Mulvaney E."/>
            <person name="Ryan E."/>
            <person name="Sun H."/>
            <person name="Florea L."/>
            <person name="Miller W."/>
            <person name="Stoneking T."/>
            <person name="Nhan M."/>
            <person name="Waterston R."/>
            <person name="Wilson R.K."/>
        </authorList>
    </citation>
    <scope>NUCLEOTIDE SEQUENCE [LARGE SCALE GENOMIC DNA]</scope>
    <source>
        <strain>LT2 / SGSC1412 / ATCC 700720</strain>
    </source>
</reference>
<dbReference type="EMBL" id="M85180">
    <property type="status" value="NOT_ANNOTATED_CDS"/>
    <property type="molecule type" value="Genomic_DNA"/>
</dbReference>
<dbReference type="EMBL" id="AE006468">
    <property type="protein sequence ID" value="AAL19696.1"/>
    <property type="molecule type" value="Genomic_DNA"/>
</dbReference>
<dbReference type="PIR" id="D37753">
    <property type="entry name" value="D37753"/>
</dbReference>
<dbReference type="RefSeq" id="NP_459737.1">
    <property type="nucleotide sequence ID" value="NC_003197.2"/>
</dbReference>
<dbReference type="RefSeq" id="WP_000345368.1">
    <property type="nucleotide sequence ID" value="NC_003197.2"/>
</dbReference>
<dbReference type="SMR" id="P24520"/>
<dbReference type="STRING" id="99287.STM0757"/>
<dbReference type="TCDB" id="4.B.1.1.1">
    <property type="family name" value="the nicotinamide ribonucleoside (nr) uptake permease (pnuc) family"/>
</dbReference>
<dbReference type="PaxDb" id="99287-STM0757"/>
<dbReference type="GeneID" id="1252277"/>
<dbReference type="KEGG" id="stm:STM0757"/>
<dbReference type="PATRIC" id="fig|99287.12.peg.788"/>
<dbReference type="HOGENOM" id="CLU_076589_1_0_6"/>
<dbReference type="OMA" id="AYVAYQW"/>
<dbReference type="PhylomeDB" id="P24520"/>
<dbReference type="BioCyc" id="SENT99287:STM0757-MONOMER"/>
<dbReference type="Proteomes" id="UP000001014">
    <property type="component" value="Chromosome"/>
</dbReference>
<dbReference type="GO" id="GO:0005886">
    <property type="term" value="C:plasma membrane"/>
    <property type="evidence" value="ECO:0000318"/>
    <property type="project" value="GO_Central"/>
</dbReference>
<dbReference type="GO" id="GO:0034257">
    <property type="term" value="F:nicotinamide riboside transmembrane transporter activity"/>
    <property type="evidence" value="ECO:0000318"/>
    <property type="project" value="GO_Central"/>
</dbReference>
<dbReference type="InterPro" id="IPR006419">
    <property type="entry name" value="NMN_transpt_PnuC"/>
</dbReference>
<dbReference type="NCBIfam" id="TIGR01528">
    <property type="entry name" value="NMN_trans_PnuC"/>
    <property type="match status" value="1"/>
</dbReference>
<dbReference type="NCBIfam" id="NF011926">
    <property type="entry name" value="PRK15397.1"/>
    <property type="match status" value="1"/>
</dbReference>
<dbReference type="PANTHER" id="PTHR36122">
    <property type="entry name" value="NICOTINAMIDE RIBOSIDE TRANSPORTER PNUC"/>
    <property type="match status" value="1"/>
</dbReference>
<dbReference type="PANTHER" id="PTHR36122:SF2">
    <property type="entry name" value="NICOTINAMIDE RIBOSIDE TRANSPORTER PNUC"/>
    <property type="match status" value="1"/>
</dbReference>
<dbReference type="Pfam" id="PF04973">
    <property type="entry name" value="NMN_transporter"/>
    <property type="match status" value="1"/>
</dbReference>
<proteinExistence type="evidence at transcript level"/>
<protein>
    <recommendedName>
        <fullName>Nicotinamide riboside transporter PnuC</fullName>
    </recommendedName>
</protein>
<comment type="function">
    <text evidence="2">Required for nicotinamide riboside transport across the inner membrane.</text>
</comment>
<comment type="subcellular location">
    <subcellularLocation>
        <location evidence="2">Cell inner membrane</location>
        <topology evidence="2">Multi-pass membrane protein</topology>
    </subcellularLocation>
</comment>
<comment type="induction">
    <text>Repressed by NadR.</text>
</comment>
<comment type="similarity">
    <text evidence="4">Belongs to the nicotinamide ribonucleoside (NR) uptake permease (TC 4.B.1) family.</text>
</comment>
<comment type="sequence caution" evidence="4">
    <conflict type="frameshift">
        <sequence resource="EMBL" id="M85180"/>
    </conflict>
</comment>
<name>PNUC_SALTY</name>
<keyword id="KW-0997">Cell inner membrane</keyword>
<keyword id="KW-1003">Cell membrane</keyword>
<keyword id="KW-0472">Membrane</keyword>
<keyword id="KW-0520">NAD</keyword>
<keyword id="KW-1185">Reference proteome</keyword>
<keyword id="KW-0812">Transmembrane</keyword>
<keyword id="KW-1133">Transmembrane helix</keyword>
<keyword id="KW-0813">Transport</keyword>